<feature type="initiator methionine" description="Removed" evidence="1">
    <location>
        <position position="1"/>
    </location>
</feature>
<feature type="chain" id="PRO_0000140585" description="Chorismate synthase">
    <location>
        <begin position="2"/>
        <end position="361"/>
    </location>
</feature>
<feature type="binding site" evidence="2">
    <location>
        <position position="48"/>
    </location>
    <ligand>
        <name>NADP(+)</name>
        <dbReference type="ChEBI" id="CHEBI:58349"/>
    </ligand>
</feature>
<feature type="binding site" evidence="2">
    <location>
        <position position="54"/>
    </location>
    <ligand>
        <name>NADP(+)</name>
        <dbReference type="ChEBI" id="CHEBI:58349"/>
    </ligand>
</feature>
<feature type="binding site" evidence="2">
    <location>
        <begin position="125"/>
        <end position="127"/>
    </location>
    <ligand>
        <name>FMN</name>
        <dbReference type="ChEBI" id="CHEBI:58210"/>
    </ligand>
</feature>
<feature type="binding site" evidence="2">
    <location>
        <begin position="238"/>
        <end position="239"/>
    </location>
    <ligand>
        <name>FMN</name>
        <dbReference type="ChEBI" id="CHEBI:58210"/>
    </ligand>
</feature>
<feature type="binding site" evidence="2">
    <location>
        <position position="278"/>
    </location>
    <ligand>
        <name>FMN</name>
        <dbReference type="ChEBI" id="CHEBI:58210"/>
    </ligand>
</feature>
<feature type="binding site" evidence="2">
    <location>
        <begin position="293"/>
        <end position="297"/>
    </location>
    <ligand>
        <name>FMN</name>
        <dbReference type="ChEBI" id="CHEBI:58210"/>
    </ligand>
</feature>
<feature type="binding site" evidence="2">
    <location>
        <position position="319"/>
    </location>
    <ligand>
        <name>FMN</name>
        <dbReference type="ChEBI" id="CHEBI:58210"/>
    </ligand>
</feature>
<comment type="function">
    <text evidence="2">Catalyzes the anti-1,4-elimination of the C-3 phosphate and the C-6 proR hydrogen from 5-enolpyruvylshikimate-3-phosphate (EPSP) to yield chorismate, which is the branch point compound that serves as the starting substrate for the three terminal pathways of aromatic amino acid biosynthesis. This reaction introduces a second double bond into the aromatic ring system.</text>
</comment>
<comment type="catalytic activity">
    <reaction evidence="2">
        <text>5-O-(1-carboxyvinyl)-3-phosphoshikimate = chorismate + phosphate</text>
        <dbReference type="Rhea" id="RHEA:21020"/>
        <dbReference type="ChEBI" id="CHEBI:29748"/>
        <dbReference type="ChEBI" id="CHEBI:43474"/>
        <dbReference type="ChEBI" id="CHEBI:57701"/>
        <dbReference type="EC" id="4.2.3.5"/>
    </reaction>
</comment>
<comment type="cofactor">
    <cofactor evidence="2">
        <name>FMNH2</name>
        <dbReference type="ChEBI" id="CHEBI:57618"/>
    </cofactor>
    <text evidence="2">Reduced FMN (FMNH(2)).</text>
</comment>
<comment type="pathway">
    <text evidence="2">Metabolic intermediate biosynthesis; chorismate biosynthesis; chorismate from D-erythrose 4-phosphate and phosphoenolpyruvate: step 7/7.</text>
</comment>
<comment type="subunit">
    <text evidence="2">Homotetramer.</text>
</comment>
<comment type="similarity">
    <text evidence="2">Belongs to the chorismate synthase family.</text>
</comment>
<comment type="sequence caution" evidence="3">
    <conflict type="erroneous initiation">
        <sequence resource="EMBL-CDS" id="AAN81325"/>
    </conflict>
    <text>Extended N-terminus.</text>
</comment>
<reference key="1">
    <citation type="journal article" date="2002" name="Proc. Natl. Acad. Sci. U.S.A.">
        <title>Extensive mosaic structure revealed by the complete genome sequence of uropathogenic Escherichia coli.</title>
        <authorList>
            <person name="Welch R.A."/>
            <person name="Burland V."/>
            <person name="Plunkett G. III"/>
            <person name="Redford P."/>
            <person name="Roesch P."/>
            <person name="Rasko D."/>
            <person name="Buckles E.L."/>
            <person name="Liou S.-R."/>
            <person name="Boutin A."/>
            <person name="Hackett J."/>
            <person name="Stroud D."/>
            <person name="Mayhew G.F."/>
            <person name="Rose D.J."/>
            <person name="Zhou S."/>
            <person name="Schwartz D.C."/>
            <person name="Perna N.T."/>
            <person name="Mobley H.L.T."/>
            <person name="Donnenberg M.S."/>
            <person name="Blattner F.R."/>
        </authorList>
    </citation>
    <scope>NUCLEOTIDE SEQUENCE [LARGE SCALE GENOMIC DNA]</scope>
    <source>
        <strain>CFT073 / ATCC 700928 / UPEC</strain>
    </source>
</reference>
<name>AROC_ECOL6</name>
<keyword id="KW-0028">Amino-acid biosynthesis</keyword>
<keyword id="KW-0057">Aromatic amino acid biosynthesis</keyword>
<keyword id="KW-0274">FAD</keyword>
<keyword id="KW-0285">Flavoprotein</keyword>
<keyword id="KW-0288">FMN</keyword>
<keyword id="KW-0456">Lyase</keyword>
<keyword id="KW-0521">NADP</keyword>
<keyword id="KW-1185">Reference proteome</keyword>
<protein>
    <recommendedName>
        <fullName evidence="2">Chorismate synthase</fullName>
        <shortName evidence="2">CS</shortName>
        <ecNumber evidence="2">4.2.3.5</ecNumber>
    </recommendedName>
    <alternativeName>
        <fullName evidence="2">5-enolpyruvylshikimate-3-phosphate phospholyase</fullName>
    </alternativeName>
</protein>
<dbReference type="EC" id="4.2.3.5" evidence="2"/>
<dbReference type="EMBL" id="AE014075">
    <property type="protein sequence ID" value="AAN81325.1"/>
    <property type="status" value="ALT_INIT"/>
    <property type="molecule type" value="Genomic_DNA"/>
</dbReference>
<dbReference type="RefSeq" id="WP_001297933.1">
    <property type="nucleotide sequence ID" value="NZ_CP051263.1"/>
</dbReference>
<dbReference type="SMR" id="P63609"/>
<dbReference type="STRING" id="199310.c2875"/>
<dbReference type="KEGG" id="ecc:c2875"/>
<dbReference type="eggNOG" id="COG0082">
    <property type="taxonomic scope" value="Bacteria"/>
</dbReference>
<dbReference type="HOGENOM" id="CLU_034547_0_2_6"/>
<dbReference type="UniPathway" id="UPA00053">
    <property type="reaction ID" value="UER00090"/>
</dbReference>
<dbReference type="Proteomes" id="UP000001410">
    <property type="component" value="Chromosome"/>
</dbReference>
<dbReference type="GO" id="GO:0005829">
    <property type="term" value="C:cytosol"/>
    <property type="evidence" value="ECO:0007669"/>
    <property type="project" value="TreeGrafter"/>
</dbReference>
<dbReference type="GO" id="GO:0004107">
    <property type="term" value="F:chorismate synthase activity"/>
    <property type="evidence" value="ECO:0007669"/>
    <property type="project" value="UniProtKB-UniRule"/>
</dbReference>
<dbReference type="GO" id="GO:0010181">
    <property type="term" value="F:FMN binding"/>
    <property type="evidence" value="ECO:0007669"/>
    <property type="project" value="TreeGrafter"/>
</dbReference>
<dbReference type="GO" id="GO:0008652">
    <property type="term" value="P:amino acid biosynthetic process"/>
    <property type="evidence" value="ECO:0007669"/>
    <property type="project" value="UniProtKB-KW"/>
</dbReference>
<dbReference type="GO" id="GO:0009073">
    <property type="term" value="P:aromatic amino acid family biosynthetic process"/>
    <property type="evidence" value="ECO:0007669"/>
    <property type="project" value="UniProtKB-KW"/>
</dbReference>
<dbReference type="GO" id="GO:0009423">
    <property type="term" value="P:chorismate biosynthetic process"/>
    <property type="evidence" value="ECO:0007669"/>
    <property type="project" value="UniProtKB-UniRule"/>
</dbReference>
<dbReference type="CDD" id="cd07304">
    <property type="entry name" value="Chorismate_synthase"/>
    <property type="match status" value="1"/>
</dbReference>
<dbReference type="FunFam" id="3.60.150.10:FF:000001">
    <property type="entry name" value="Chorismate synthase"/>
    <property type="match status" value="1"/>
</dbReference>
<dbReference type="Gene3D" id="3.60.150.10">
    <property type="entry name" value="Chorismate synthase AroC"/>
    <property type="match status" value="1"/>
</dbReference>
<dbReference type="HAMAP" id="MF_00300">
    <property type="entry name" value="Chorismate_synth"/>
    <property type="match status" value="1"/>
</dbReference>
<dbReference type="InterPro" id="IPR000453">
    <property type="entry name" value="Chorismate_synth"/>
</dbReference>
<dbReference type="InterPro" id="IPR035904">
    <property type="entry name" value="Chorismate_synth_AroC_sf"/>
</dbReference>
<dbReference type="InterPro" id="IPR020541">
    <property type="entry name" value="Chorismate_synthase_CS"/>
</dbReference>
<dbReference type="NCBIfam" id="TIGR00033">
    <property type="entry name" value="aroC"/>
    <property type="match status" value="1"/>
</dbReference>
<dbReference type="NCBIfam" id="NF003793">
    <property type="entry name" value="PRK05382.1"/>
    <property type="match status" value="1"/>
</dbReference>
<dbReference type="PANTHER" id="PTHR21085">
    <property type="entry name" value="CHORISMATE SYNTHASE"/>
    <property type="match status" value="1"/>
</dbReference>
<dbReference type="PANTHER" id="PTHR21085:SF0">
    <property type="entry name" value="CHORISMATE SYNTHASE"/>
    <property type="match status" value="1"/>
</dbReference>
<dbReference type="Pfam" id="PF01264">
    <property type="entry name" value="Chorismate_synt"/>
    <property type="match status" value="1"/>
</dbReference>
<dbReference type="PIRSF" id="PIRSF001456">
    <property type="entry name" value="Chorismate_synth"/>
    <property type="match status" value="1"/>
</dbReference>
<dbReference type="SUPFAM" id="SSF103263">
    <property type="entry name" value="Chorismate synthase, AroC"/>
    <property type="match status" value="1"/>
</dbReference>
<dbReference type="PROSITE" id="PS00787">
    <property type="entry name" value="CHORISMATE_SYNTHASE_1"/>
    <property type="match status" value="1"/>
</dbReference>
<dbReference type="PROSITE" id="PS00788">
    <property type="entry name" value="CHORISMATE_SYNTHASE_2"/>
    <property type="match status" value="1"/>
</dbReference>
<dbReference type="PROSITE" id="PS00789">
    <property type="entry name" value="CHORISMATE_SYNTHASE_3"/>
    <property type="match status" value="1"/>
</dbReference>
<evidence type="ECO:0000250" key="1"/>
<evidence type="ECO:0000255" key="2">
    <source>
        <dbReference type="HAMAP-Rule" id="MF_00300"/>
    </source>
</evidence>
<evidence type="ECO:0000305" key="3"/>
<proteinExistence type="inferred from homology"/>
<organism>
    <name type="scientific">Escherichia coli O6:H1 (strain CFT073 / ATCC 700928 / UPEC)</name>
    <dbReference type="NCBI Taxonomy" id="199310"/>
    <lineage>
        <taxon>Bacteria</taxon>
        <taxon>Pseudomonadati</taxon>
        <taxon>Pseudomonadota</taxon>
        <taxon>Gammaproteobacteria</taxon>
        <taxon>Enterobacterales</taxon>
        <taxon>Enterobacteriaceae</taxon>
        <taxon>Escherichia</taxon>
    </lineage>
</organism>
<sequence>MAGNTIGQLFRVTTFGESHGLALGCIVDGVPPGIPLTEADLQHDLDRRRPGTSRYTTQRREPDQVKILSGVFEGVTTGTSIGLLIENTDQRSQDYSAIKDVFRPGHADYTYEQKYGLRDYRGGGRSSARETAMRVAAGAIAKKYLAEKFGIEIRGCLTQMGDIPLEIKDWSQVEQNPFFCPDPDKIDALDELMRALKKEGDSIGAKVTVVASGVPAGLGEPVFDRLDADIAHALMSINAVKGVEIGDGFDVVALRGSQNRDEITKDGFQSNHAGGILGGISSGQQIIAHMALKPTSSITVPGRTINRFGEEVEMITKGRHDPCVGIRAVPIAEAMLAIVLMDHLLRQRAQNADVKTDIPRW</sequence>
<accession>P63609</accession>
<accession>Q8XCQ4</accession>
<gene>
    <name evidence="2" type="primary">aroC</name>
    <name type="ordered locus">c2875</name>
</gene>